<reference key="1">
    <citation type="journal article" date="2006" name="Genome Res.">
        <title>Massive genome erosion and functional adaptations provide insights into the symbiotic lifestyle of Sodalis glossinidius in the tsetse host.</title>
        <authorList>
            <person name="Toh H."/>
            <person name="Weiss B.L."/>
            <person name="Perkin S.A.H."/>
            <person name="Yamashita A."/>
            <person name="Oshima K."/>
            <person name="Hattori M."/>
            <person name="Aksoy S."/>
        </authorList>
    </citation>
    <scope>NUCLEOTIDE SEQUENCE [LARGE SCALE GENOMIC DNA]</scope>
    <source>
        <strain>morsitans</strain>
    </source>
</reference>
<sequence>MLVWLAEHLVQFYSGFNVFSYLTFRAIVSLLTALFLSLWMGPRLIAWLQKLQIAQVVRNDGPESHFSKRGTPTMGGLMILTSITISVLMWAYPSNPYVWCVLFVLVGYGIVGFIDDYRKVVRKDTKGLIVRWKYFWQSVIALAVAFTMFAVGKDTPATQLAVPFFKDIMPQLGLWYVLLAYFVIVGTSNAVNLTDGLDGLAIMPTVFVAAGLALVAWATGNMNFAGYLHIPYVRFAGELVVVCTAIVGAGLGFLWFNTYPAQVFMGDVGSLALGGALGTIAVLLRQEFLLLIMGGVFVVETLSVILQVGSFKLRGQRIFRMAPIHHHYELKGWPEPRVIVRFWIISLMLVLIGLATLKVR</sequence>
<name>MRAY_SODGM</name>
<organism>
    <name type="scientific">Sodalis glossinidius (strain morsitans)</name>
    <dbReference type="NCBI Taxonomy" id="343509"/>
    <lineage>
        <taxon>Bacteria</taxon>
        <taxon>Pseudomonadati</taxon>
        <taxon>Pseudomonadota</taxon>
        <taxon>Gammaproteobacteria</taxon>
        <taxon>Enterobacterales</taxon>
        <taxon>Bruguierivoracaceae</taxon>
        <taxon>Sodalis</taxon>
    </lineage>
</organism>
<gene>
    <name evidence="1" type="primary">mraY</name>
    <name type="ordered locus">SG0446</name>
</gene>
<evidence type="ECO:0000255" key="1">
    <source>
        <dbReference type="HAMAP-Rule" id="MF_00038"/>
    </source>
</evidence>
<dbReference type="EC" id="2.7.8.13" evidence="1"/>
<dbReference type="EMBL" id="AP008232">
    <property type="protein sequence ID" value="BAE73721.1"/>
    <property type="molecule type" value="Genomic_DNA"/>
</dbReference>
<dbReference type="RefSeq" id="WP_011410419.1">
    <property type="nucleotide sequence ID" value="NC_007712.1"/>
</dbReference>
<dbReference type="SMR" id="Q2NVV4"/>
<dbReference type="STRING" id="343509.SG0446"/>
<dbReference type="KEGG" id="sgl:SG0446"/>
<dbReference type="eggNOG" id="COG0472">
    <property type="taxonomic scope" value="Bacteria"/>
</dbReference>
<dbReference type="HOGENOM" id="CLU_023982_0_0_6"/>
<dbReference type="OrthoDB" id="9805475at2"/>
<dbReference type="BioCyc" id="SGLO343509:SGP1_RS04000-MONOMER"/>
<dbReference type="UniPathway" id="UPA00219"/>
<dbReference type="Proteomes" id="UP000001932">
    <property type="component" value="Chromosome"/>
</dbReference>
<dbReference type="GO" id="GO:0005886">
    <property type="term" value="C:plasma membrane"/>
    <property type="evidence" value="ECO:0007669"/>
    <property type="project" value="UniProtKB-SubCell"/>
</dbReference>
<dbReference type="GO" id="GO:0046872">
    <property type="term" value="F:metal ion binding"/>
    <property type="evidence" value="ECO:0007669"/>
    <property type="project" value="UniProtKB-KW"/>
</dbReference>
<dbReference type="GO" id="GO:0008963">
    <property type="term" value="F:phospho-N-acetylmuramoyl-pentapeptide-transferase activity"/>
    <property type="evidence" value="ECO:0007669"/>
    <property type="project" value="UniProtKB-UniRule"/>
</dbReference>
<dbReference type="GO" id="GO:0051992">
    <property type="term" value="F:UDP-N-acetylmuramoyl-L-alanyl-D-glutamyl-meso-2,6-diaminopimelyl-D-alanyl-D-alanine:undecaprenyl-phosphate transferase activity"/>
    <property type="evidence" value="ECO:0007669"/>
    <property type="project" value="RHEA"/>
</dbReference>
<dbReference type="GO" id="GO:0051301">
    <property type="term" value="P:cell division"/>
    <property type="evidence" value="ECO:0007669"/>
    <property type="project" value="UniProtKB-KW"/>
</dbReference>
<dbReference type="GO" id="GO:0071555">
    <property type="term" value="P:cell wall organization"/>
    <property type="evidence" value="ECO:0007669"/>
    <property type="project" value="UniProtKB-KW"/>
</dbReference>
<dbReference type="GO" id="GO:0009252">
    <property type="term" value="P:peptidoglycan biosynthetic process"/>
    <property type="evidence" value="ECO:0007669"/>
    <property type="project" value="UniProtKB-UniRule"/>
</dbReference>
<dbReference type="GO" id="GO:0008360">
    <property type="term" value="P:regulation of cell shape"/>
    <property type="evidence" value="ECO:0007669"/>
    <property type="project" value="UniProtKB-KW"/>
</dbReference>
<dbReference type="CDD" id="cd06852">
    <property type="entry name" value="GT_MraY"/>
    <property type="match status" value="1"/>
</dbReference>
<dbReference type="HAMAP" id="MF_00038">
    <property type="entry name" value="MraY"/>
    <property type="match status" value="1"/>
</dbReference>
<dbReference type="InterPro" id="IPR000715">
    <property type="entry name" value="Glycosyl_transferase_4"/>
</dbReference>
<dbReference type="InterPro" id="IPR003524">
    <property type="entry name" value="PNAcMuramoyl-5peptid_Trfase"/>
</dbReference>
<dbReference type="InterPro" id="IPR018480">
    <property type="entry name" value="PNAcMuramoyl-5peptid_Trfase_CS"/>
</dbReference>
<dbReference type="NCBIfam" id="TIGR00445">
    <property type="entry name" value="mraY"/>
    <property type="match status" value="1"/>
</dbReference>
<dbReference type="PANTHER" id="PTHR22926">
    <property type="entry name" value="PHOSPHO-N-ACETYLMURAMOYL-PENTAPEPTIDE-TRANSFERASE"/>
    <property type="match status" value="1"/>
</dbReference>
<dbReference type="PANTHER" id="PTHR22926:SF5">
    <property type="entry name" value="PHOSPHO-N-ACETYLMURAMOYL-PENTAPEPTIDE-TRANSFERASE HOMOLOG"/>
    <property type="match status" value="1"/>
</dbReference>
<dbReference type="Pfam" id="PF00953">
    <property type="entry name" value="Glycos_transf_4"/>
    <property type="match status" value="1"/>
</dbReference>
<dbReference type="Pfam" id="PF10555">
    <property type="entry name" value="MraY_sig1"/>
    <property type="match status" value="1"/>
</dbReference>
<dbReference type="PROSITE" id="PS01347">
    <property type="entry name" value="MRAY_1"/>
    <property type="match status" value="1"/>
</dbReference>
<dbReference type="PROSITE" id="PS01348">
    <property type="entry name" value="MRAY_2"/>
    <property type="match status" value="1"/>
</dbReference>
<accession>Q2NVV4</accession>
<feature type="chain" id="PRO_0000235483" description="Phospho-N-acetylmuramoyl-pentapeptide-transferase">
    <location>
        <begin position="1"/>
        <end position="360"/>
    </location>
</feature>
<feature type="transmembrane region" description="Helical" evidence="1">
    <location>
        <begin position="27"/>
        <end position="47"/>
    </location>
</feature>
<feature type="transmembrane region" description="Helical" evidence="1">
    <location>
        <begin position="72"/>
        <end position="92"/>
    </location>
</feature>
<feature type="transmembrane region" description="Helical" evidence="1">
    <location>
        <begin position="94"/>
        <end position="114"/>
    </location>
</feature>
<feature type="transmembrane region" description="Helical" evidence="1">
    <location>
        <begin position="132"/>
        <end position="152"/>
    </location>
</feature>
<feature type="transmembrane region" description="Helical" evidence="1">
    <location>
        <begin position="168"/>
        <end position="188"/>
    </location>
</feature>
<feature type="transmembrane region" description="Helical" evidence="1">
    <location>
        <begin position="199"/>
        <end position="219"/>
    </location>
</feature>
<feature type="transmembrane region" description="Helical" evidence="1">
    <location>
        <begin position="235"/>
        <end position="255"/>
    </location>
</feature>
<feature type="transmembrane region" description="Helical" evidence="1">
    <location>
        <begin position="263"/>
        <end position="283"/>
    </location>
</feature>
<feature type="transmembrane region" description="Helical" evidence="1">
    <location>
        <begin position="288"/>
        <end position="308"/>
    </location>
</feature>
<feature type="transmembrane region" description="Helical" evidence="1">
    <location>
        <begin position="338"/>
        <end position="358"/>
    </location>
</feature>
<protein>
    <recommendedName>
        <fullName evidence="1">Phospho-N-acetylmuramoyl-pentapeptide-transferase</fullName>
        <ecNumber evidence="1">2.7.8.13</ecNumber>
    </recommendedName>
    <alternativeName>
        <fullName evidence="1">UDP-MurNAc-pentapeptide phosphotransferase</fullName>
    </alternativeName>
</protein>
<proteinExistence type="inferred from homology"/>
<keyword id="KW-0131">Cell cycle</keyword>
<keyword id="KW-0132">Cell division</keyword>
<keyword id="KW-0997">Cell inner membrane</keyword>
<keyword id="KW-1003">Cell membrane</keyword>
<keyword id="KW-0133">Cell shape</keyword>
<keyword id="KW-0961">Cell wall biogenesis/degradation</keyword>
<keyword id="KW-0460">Magnesium</keyword>
<keyword id="KW-0472">Membrane</keyword>
<keyword id="KW-0479">Metal-binding</keyword>
<keyword id="KW-0573">Peptidoglycan synthesis</keyword>
<keyword id="KW-0808">Transferase</keyword>
<keyword id="KW-0812">Transmembrane</keyword>
<keyword id="KW-1133">Transmembrane helix</keyword>
<comment type="function">
    <text evidence="1">Catalyzes the initial step of the lipid cycle reactions in the biosynthesis of the cell wall peptidoglycan: transfers peptidoglycan precursor phospho-MurNAc-pentapeptide from UDP-MurNAc-pentapeptide onto the lipid carrier undecaprenyl phosphate, yielding undecaprenyl-pyrophosphoryl-MurNAc-pentapeptide, known as lipid I.</text>
</comment>
<comment type="catalytic activity">
    <reaction evidence="1">
        <text>UDP-N-acetyl-alpha-D-muramoyl-L-alanyl-gamma-D-glutamyl-meso-2,6-diaminopimeloyl-D-alanyl-D-alanine + di-trans,octa-cis-undecaprenyl phosphate = di-trans,octa-cis-undecaprenyl diphospho-N-acetyl-alpha-D-muramoyl-L-alanyl-D-glutamyl-meso-2,6-diaminopimeloyl-D-alanyl-D-alanine + UMP</text>
        <dbReference type="Rhea" id="RHEA:28386"/>
        <dbReference type="ChEBI" id="CHEBI:57865"/>
        <dbReference type="ChEBI" id="CHEBI:60392"/>
        <dbReference type="ChEBI" id="CHEBI:61386"/>
        <dbReference type="ChEBI" id="CHEBI:61387"/>
        <dbReference type="EC" id="2.7.8.13"/>
    </reaction>
</comment>
<comment type="cofactor">
    <cofactor evidence="1">
        <name>Mg(2+)</name>
        <dbReference type="ChEBI" id="CHEBI:18420"/>
    </cofactor>
</comment>
<comment type="pathway">
    <text evidence="1">Cell wall biogenesis; peptidoglycan biosynthesis.</text>
</comment>
<comment type="subcellular location">
    <subcellularLocation>
        <location evidence="1">Cell inner membrane</location>
        <topology evidence="1">Multi-pass membrane protein</topology>
    </subcellularLocation>
</comment>
<comment type="similarity">
    <text evidence="1">Belongs to the glycosyltransferase 4 family. MraY subfamily.</text>
</comment>